<comment type="function">
    <text evidence="6 8 9">Functions as an osmosensor histidine kinase that detects water stress and transmits the stress signal to a downstream MAPK cascade. This protein undergoes an ATP-dependent autophosphorylation at a conserved histidine residue in the kinase core, and a phosphoryl group is then transferred to a conserved aspartate residue in the receiver domain. Positive regulator of drought and salt stress responses, and abscisic acid (ABA) signaling. Confers drought tolerance, probably by regulating levels of ABA accumulation. Plays a redundant role in regulating plant growth and development. Required for the regulation of desiccation processes during seed formation.</text>
</comment>
<comment type="catalytic activity">
    <reaction>
        <text>ATP + protein L-histidine = ADP + protein N-phospho-L-histidine.</text>
        <dbReference type="EC" id="2.7.13.3"/>
    </reaction>
</comment>
<comment type="subunit">
    <text evidence="7">Interacts with AHP2, depending of the phosphorylation state of Asp-1075 in the receiver domain, but probably not with AHP1 and AHP3.</text>
</comment>
<comment type="subcellular location">
    <subcellularLocation>
        <location evidence="1">Cell membrane</location>
        <topology evidence="1">Multi-pass membrane protein</topology>
    </subcellularLocation>
</comment>
<comment type="tissue specificity">
    <text evidence="6">Mostly expressed in roots, and, to a lower extent, in stems, leaves and flowers.</text>
</comment>
<comment type="induction">
    <text evidence="6 8">Up-regulated in response to changes in external osmolarity, low temperature, cytokinin (CK) treatment, and dehydration.</text>
</comment>
<comment type="PTM">
    <text evidence="1">Autophosphorylated predominantly on His residues. Activation probably requires a transfer of a phosphate group between a His in the transmitter domain and an Asp of the receiver domain (By similarity).</text>
</comment>
<comment type="disruption phenotype">
    <text evidence="8 9">Insensitivity to ABA, but hypersensitivity to drought and high salinity stresses. Loss of seed viability over time dur to altered desiccation.</text>
</comment>
<reference key="1">
    <citation type="journal article" date="1999" name="Plant Cell">
        <title>A transmembrane hybrid-type histidine kinase in Arabidopsis functions as an osmosensor.</title>
        <authorList>
            <person name="Urao T."/>
            <person name="Yakubov B."/>
            <person name="Satoh R."/>
            <person name="Yamaguchi-Shinozaki K."/>
            <person name="Seki M."/>
            <person name="Hirayama T."/>
            <person name="Shinozaki K."/>
        </authorList>
    </citation>
    <scope>NUCLEOTIDE SEQUENCE [MRNA]</scope>
    <scope>FUNCTION</scope>
    <scope>TISSUE SPECIFICITY</scope>
    <scope>INDUCTION</scope>
    <scope>MUTAGENESIS OF HIS-508 AND ASP-1075</scope>
</reference>
<reference key="2">
    <citation type="journal article" date="1999" name="Nature">
        <title>Sequence and analysis of chromosome 2 of the plant Arabidopsis thaliana.</title>
        <authorList>
            <person name="Lin X."/>
            <person name="Kaul S."/>
            <person name="Rounsley S.D."/>
            <person name="Shea T.P."/>
            <person name="Benito M.-I."/>
            <person name="Town C.D."/>
            <person name="Fujii C.Y."/>
            <person name="Mason T.M."/>
            <person name="Bowman C.L."/>
            <person name="Barnstead M.E."/>
            <person name="Feldblyum T.V."/>
            <person name="Buell C.R."/>
            <person name="Ketchum K.A."/>
            <person name="Lee J.J."/>
            <person name="Ronning C.M."/>
            <person name="Koo H.L."/>
            <person name="Moffat K.S."/>
            <person name="Cronin L.A."/>
            <person name="Shen M."/>
            <person name="Pai G."/>
            <person name="Van Aken S."/>
            <person name="Umayam L."/>
            <person name="Tallon L.J."/>
            <person name="Gill J.E."/>
            <person name="Adams M.D."/>
            <person name="Carrera A.J."/>
            <person name="Creasy T.H."/>
            <person name="Goodman H.M."/>
            <person name="Somerville C.R."/>
            <person name="Copenhaver G.P."/>
            <person name="Preuss D."/>
            <person name="Nierman W.C."/>
            <person name="White O."/>
            <person name="Eisen J.A."/>
            <person name="Salzberg S.L."/>
            <person name="Fraser C.M."/>
            <person name="Venter J.C."/>
        </authorList>
    </citation>
    <scope>NUCLEOTIDE SEQUENCE [LARGE SCALE GENOMIC DNA]</scope>
    <source>
        <strain>cv. Columbia</strain>
    </source>
</reference>
<reference key="3">
    <citation type="journal article" date="2017" name="Plant J.">
        <title>Araport11: a complete reannotation of the Arabidopsis thaliana reference genome.</title>
        <authorList>
            <person name="Cheng C.Y."/>
            <person name="Krishnakumar V."/>
            <person name="Chan A.P."/>
            <person name="Thibaud-Nissen F."/>
            <person name="Schobel S."/>
            <person name="Town C.D."/>
        </authorList>
    </citation>
    <scope>GENOME REANNOTATION</scope>
    <source>
        <strain>cv. Columbia</strain>
    </source>
</reference>
<reference key="4">
    <citation type="journal article" date="2000" name="FEBS Lett.">
        <title>Possible His to Asp phosphorelay signaling in an Arabidopsis two-component system.</title>
        <authorList>
            <person name="Urao T."/>
            <person name="Miyata S."/>
            <person name="Yamaguchi-Shinozaki K."/>
            <person name="Shinozaki K."/>
        </authorList>
    </citation>
    <scope>INTERACTION WITH AHP2</scope>
    <scope>MUTAGENESIS OF ASP-1075</scope>
</reference>
<reference key="5">
    <citation type="journal article" date="2002" name="Genes Genet. Syst.">
        <title>His-Asp phosphorelay signal transduction in higher plants: receptors and response regulators for cytokinin signaling in Arabidopsis thaliana.</title>
        <authorList>
            <person name="Oka A."/>
            <person name="Sakai H."/>
            <person name="Iwakoshi S."/>
        </authorList>
    </citation>
    <scope>REVIEW</scope>
</reference>
<reference key="6">
    <citation type="journal article" date="2002" name="Plant Physiol.">
        <title>Two-component signal transduction pathways in Arabidopsis.</title>
        <authorList>
            <person name="Hwang I."/>
            <person name="Chen H.-C."/>
            <person name="Sheen J."/>
        </authorList>
    </citation>
    <scope>GENE FAMILY</scope>
    <scope>NOMENCLATURE</scope>
</reference>
<reference key="7">
    <citation type="journal article" date="2007" name="Proc. Natl. Acad. Sci. U.S.A.">
        <title>Functional analysis of AHK1/ATHK1 and cytokinin receptor histidine kinases in response to abscisic acid, drought, and salt stress in Arabidopsis.</title>
        <authorList>
            <person name="Tran L.S."/>
            <person name="Urao T."/>
            <person name="Qin F."/>
            <person name="Maruyama K."/>
            <person name="Kakimoto T."/>
            <person name="Shinozaki K."/>
            <person name="Yamaguchi-Shinozaki K."/>
        </authorList>
    </citation>
    <scope>FUNCTION</scope>
    <scope>INDUCTION</scope>
    <scope>DISRUPTION PHENOTYPE</scope>
</reference>
<reference key="8">
    <citation type="journal article" date="2008" name="Plant Cell">
        <title>Analysis of the Arabidopsis histidine kinase ATHK1 reveals a connection between vegetative osmotic stress sensing and seed maturation.</title>
        <authorList>
            <person name="Wohlbach D.J."/>
            <person name="Quirino B.F."/>
            <person name="Sussman M.R."/>
        </authorList>
    </citation>
    <scope>FUNCTION</scope>
    <scope>DISRUPTION PHENOTYPE</scope>
</reference>
<sequence>MRGDSFSMSIENLPDSPMGSRKKKMQIRKVFDKMTEWVTPWRSNLESPREMMILRGDVEQDEFQYASSHCLSSYYSVFVVRLAIMVMLAILIGLLTVLTWHFTRIYTKQSLQTLAYGLRYELLQRPVLRMWSVLNTTSELTTAQVKLSEYVIKKYDKPTTQEELVEMYQAMKDVTWALFASAKALNAITINYRNGFVQAFHRDPASSSTFYIFSDLKNYSISGTGPEDVSGWNNKSIHGNMSAIWYQQQLDPVTGENLGKPLKIPPDDLINIAGISQVPDGEASWHVTVSKYMDSPLLSAALPVFDASNKSIVAVVGVTTALYSVGQLMRDLVEVHGGHIYLTSQEGYLLATSTDGPLLKNTSNGPQLMKATDSEEWVIKSGAQWLEKTYGSKRPHVVHAENVKLGDQRYYIDSFYLNLKRLPIVGVVIIPRKFIMGKVDERAFKTLIILISASVCIFFIGCVCILILTNGVSKEMKLRAELIRQLDARRRAEASSNYKSQFLANMSHELRTPMAAVIGLLDILISDDCLSNEQYATVTQIRKCSTALLRLLNNILDLSKVESGKLVLEEAEFDLGRELEGLVDMFSVQCINHNVETVLDLSDDMPALVRGDSARLVQIFANLISNSIKFTTTGHIILRGWCENINSLHDEMSVSVDRRKPWAPMKTKQVQHRNHLQKSCKNANKMVLWFEVDDTGCGIDPSKWDSVFESFEQADPSTTRTHGGTGLGLCIVRNLVNKMGGEIKVVQKNGLGTLMRLYLILSTPDTVDQNIQPDFSKYGLVVMLSMYGSTARMITSKWLRKHGIATVEASDWNELTQIIRDLLETGSRDNSFDSQHNISDPLRAELSNIVEIKNPVFVIVVDIGVLDLTTNIWKEQLNYLDRFSNKAKFAWLLKHDTSNTVKTELRRKGHVMMVNKPLYKAKMIQILEAVIKNRKRGLCNDLRNRGNGSDESHDCLEIDPTQFDTCSSDDSSETSGEKQVDKSVKPSTLHSPVLKNYLIDATTSNDDSTSASMTQKNPEEEDWKDRLYSGIALDGKNQKSLEGIRILLAEDTPVLQRVATIMLEKMGATVTAVWDGQQAVDSLNYKSINAQAPTEEHKSFEEETANKVTTRETSLRNSSPYDLILMDCQMPKMDGYEATKAIRRAEIGTELHIPIVALTAHAMSSDEAKCLEVGMDAYLTKPIDRKLMVSTILSLTKPSAFQTSLSA</sequence>
<organism>
    <name type="scientific">Arabidopsis thaliana</name>
    <name type="common">Mouse-ear cress</name>
    <dbReference type="NCBI Taxonomy" id="3702"/>
    <lineage>
        <taxon>Eukaryota</taxon>
        <taxon>Viridiplantae</taxon>
        <taxon>Streptophyta</taxon>
        <taxon>Embryophyta</taxon>
        <taxon>Tracheophyta</taxon>
        <taxon>Spermatophyta</taxon>
        <taxon>Magnoliopsida</taxon>
        <taxon>eudicotyledons</taxon>
        <taxon>Gunneridae</taxon>
        <taxon>Pentapetalae</taxon>
        <taxon>rosids</taxon>
        <taxon>malvids</taxon>
        <taxon>Brassicales</taxon>
        <taxon>Brassicaceae</taxon>
        <taxon>Camelineae</taxon>
        <taxon>Arabidopsis</taxon>
    </lineage>
</organism>
<feature type="chain" id="PRO_0000398586" description="Histidine kinase 1">
    <location>
        <begin position="1"/>
        <end position="1207"/>
    </location>
</feature>
<feature type="topological domain" description="Cytoplasmic" evidence="2">
    <location>
        <begin position="1"/>
        <end position="81"/>
    </location>
</feature>
<feature type="transmembrane region" description="Helical" evidence="2">
    <location>
        <begin position="82"/>
        <end position="102"/>
    </location>
</feature>
<feature type="topological domain" description="Extracellular" evidence="2">
    <location>
        <begin position="103"/>
        <end position="446"/>
    </location>
</feature>
<feature type="transmembrane region" description="Helical" evidence="2">
    <location>
        <begin position="447"/>
        <end position="467"/>
    </location>
</feature>
<feature type="topological domain" description="Cytoplasmic" evidence="2">
    <location>
        <begin position="468"/>
        <end position="1207"/>
    </location>
</feature>
<feature type="domain" description="Histidine kinase" evidence="3">
    <location>
        <begin position="505"/>
        <end position="763"/>
    </location>
</feature>
<feature type="domain" description="Response regulatory" evidence="4">
    <location>
        <begin position="1045"/>
        <end position="1196"/>
    </location>
</feature>
<feature type="region of interest" description="Disordered" evidence="5">
    <location>
        <begin position="1"/>
        <end position="20"/>
    </location>
</feature>
<feature type="region of interest" description="Disordered" evidence="5">
    <location>
        <begin position="964"/>
        <end position="987"/>
    </location>
</feature>
<feature type="region of interest" description="Disordered" evidence="5">
    <location>
        <begin position="1000"/>
        <end position="1021"/>
    </location>
</feature>
<feature type="compositionally biased region" description="Polar residues" evidence="5">
    <location>
        <begin position="1"/>
        <end position="10"/>
    </location>
</feature>
<feature type="compositionally biased region" description="Basic and acidic residues" evidence="5">
    <location>
        <begin position="975"/>
        <end position="984"/>
    </location>
</feature>
<feature type="compositionally biased region" description="Low complexity" evidence="5">
    <location>
        <begin position="1000"/>
        <end position="1014"/>
    </location>
</feature>
<feature type="modified residue" description="Phosphohistidine; by autocatalysis" evidence="3">
    <location>
        <position position="508"/>
    </location>
</feature>
<feature type="modified residue" description="4-aspartylphosphate" evidence="4">
    <location>
        <position position="1127"/>
    </location>
</feature>
<feature type="mutagenesis site" description="Loss of histidine kinase activity." evidence="6">
    <original>H</original>
    <variation>V</variation>
    <location>
        <position position="508"/>
    </location>
</feature>
<feature type="mutagenesis site" description="Loss of histidine kinase activity and impaired interaction with AHP2." evidence="6 7">
    <original>D</original>
    <variation>E</variation>
    <location>
        <position position="1075"/>
    </location>
</feature>
<feature type="sequence conflict" description="In Ref. 1; BAA32085." evidence="10" ref="1">
    <original>I</original>
    <variation>F</variation>
    <location>
        <position position="1046"/>
    </location>
</feature>
<name>AHK1_ARATH</name>
<gene>
    <name type="primary">AHK1</name>
    <name type="ordered locus">At2g17820</name>
    <name type="ORF">T13L16.16</name>
    <name type="ORF">T17A5</name>
</gene>
<dbReference type="EC" id="2.7.13.3"/>
<dbReference type="EMBL" id="AB010914">
    <property type="protein sequence ID" value="BAA32085.1"/>
    <property type="molecule type" value="mRNA"/>
</dbReference>
<dbReference type="EMBL" id="CP002685">
    <property type="protein sequence ID" value="AEC06691.1"/>
    <property type="molecule type" value="Genomic_DNA"/>
</dbReference>
<dbReference type="PIR" id="T08856">
    <property type="entry name" value="T08856"/>
</dbReference>
<dbReference type="PIR" id="T52459">
    <property type="entry name" value="T52459"/>
</dbReference>
<dbReference type="RefSeq" id="NP_565424.1">
    <property type="nucleotide sequence ID" value="NM_127335.2"/>
</dbReference>
<dbReference type="SMR" id="Q9SXL4"/>
<dbReference type="BioGRID" id="1648">
    <property type="interactions" value="2"/>
</dbReference>
<dbReference type="FunCoup" id="Q9SXL4">
    <property type="interactions" value="21"/>
</dbReference>
<dbReference type="IntAct" id="Q9SXL4">
    <property type="interactions" value="1"/>
</dbReference>
<dbReference type="STRING" id="3702.Q9SXL4"/>
<dbReference type="PaxDb" id="3702-AT2G17820.1"/>
<dbReference type="ProteomicsDB" id="244720"/>
<dbReference type="EnsemblPlants" id="AT2G17820.1">
    <property type="protein sequence ID" value="AT2G17820.1"/>
    <property type="gene ID" value="AT2G17820"/>
</dbReference>
<dbReference type="GeneID" id="816291"/>
<dbReference type="Gramene" id="AT2G17820.1">
    <property type="protein sequence ID" value="AT2G17820.1"/>
    <property type="gene ID" value="AT2G17820"/>
</dbReference>
<dbReference type="KEGG" id="ath:AT2G17820"/>
<dbReference type="Araport" id="AT2G17820"/>
<dbReference type="TAIR" id="AT2G17820">
    <property type="gene designation" value="HK1"/>
</dbReference>
<dbReference type="eggNOG" id="KOG0519">
    <property type="taxonomic scope" value="Eukaryota"/>
</dbReference>
<dbReference type="HOGENOM" id="CLU_000445_104_15_1"/>
<dbReference type="InParanoid" id="Q9SXL4"/>
<dbReference type="OMA" id="CKNENKM"/>
<dbReference type="BRENDA" id="2.7.13.3">
    <property type="organism ID" value="399"/>
</dbReference>
<dbReference type="PRO" id="PR:Q9SXL4"/>
<dbReference type="Proteomes" id="UP000006548">
    <property type="component" value="Chromosome 2"/>
</dbReference>
<dbReference type="ExpressionAtlas" id="Q9SXL4">
    <property type="expression patterns" value="baseline and differential"/>
</dbReference>
<dbReference type="GO" id="GO:0005886">
    <property type="term" value="C:plasma membrane"/>
    <property type="evidence" value="ECO:0000250"/>
    <property type="project" value="UniProtKB"/>
</dbReference>
<dbReference type="GO" id="GO:0009927">
    <property type="term" value="F:histidine phosphotransfer kinase activity"/>
    <property type="evidence" value="ECO:0000315"/>
    <property type="project" value="TAIR"/>
</dbReference>
<dbReference type="GO" id="GO:0005034">
    <property type="term" value="F:osmosensor activity"/>
    <property type="evidence" value="ECO:0000315"/>
    <property type="project" value="TAIR"/>
</dbReference>
<dbReference type="GO" id="GO:0000155">
    <property type="term" value="F:phosphorelay sensor kinase activity"/>
    <property type="evidence" value="ECO:0007669"/>
    <property type="project" value="InterPro"/>
</dbReference>
<dbReference type="GO" id="GO:0009738">
    <property type="term" value="P:abscisic acid-activated signaling pathway"/>
    <property type="evidence" value="ECO:0007669"/>
    <property type="project" value="UniProtKB-KW"/>
</dbReference>
<dbReference type="GO" id="GO:0006970">
    <property type="term" value="P:response to osmotic stress"/>
    <property type="evidence" value="ECO:0000315"/>
    <property type="project" value="TAIR"/>
</dbReference>
<dbReference type="GO" id="GO:0009414">
    <property type="term" value="P:response to water deprivation"/>
    <property type="evidence" value="ECO:0000315"/>
    <property type="project" value="TAIR"/>
</dbReference>
<dbReference type="GO" id="GO:0010431">
    <property type="term" value="P:seed maturation"/>
    <property type="evidence" value="ECO:0000315"/>
    <property type="project" value="TAIR"/>
</dbReference>
<dbReference type="GO" id="GO:0010375">
    <property type="term" value="P:stomatal complex patterning"/>
    <property type="evidence" value="ECO:0000315"/>
    <property type="project" value="TAIR"/>
</dbReference>
<dbReference type="CDD" id="cd00082">
    <property type="entry name" value="HisKA"/>
    <property type="match status" value="1"/>
</dbReference>
<dbReference type="CDD" id="cd17546">
    <property type="entry name" value="REC_hyHK_CKI1_RcsC-like"/>
    <property type="match status" value="1"/>
</dbReference>
<dbReference type="FunFam" id="3.30.565.10:FF:000087">
    <property type="entry name" value="Histidine kinase 1"/>
    <property type="match status" value="1"/>
</dbReference>
<dbReference type="FunFam" id="3.40.50.2300:FF:000367">
    <property type="entry name" value="Histidine kinase 1"/>
    <property type="match status" value="1"/>
</dbReference>
<dbReference type="FunFam" id="1.10.287.130:FF:000025">
    <property type="entry name" value="Histidine kinase 1-like protein"/>
    <property type="match status" value="1"/>
</dbReference>
<dbReference type="Gene3D" id="1.10.287.130">
    <property type="match status" value="1"/>
</dbReference>
<dbReference type="Gene3D" id="3.40.50.2300">
    <property type="match status" value="1"/>
</dbReference>
<dbReference type="Gene3D" id="3.30.565.10">
    <property type="entry name" value="Histidine kinase-like ATPase, C-terminal domain"/>
    <property type="match status" value="1"/>
</dbReference>
<dbReference type="InterPro" id="IPR011006">
    <property type="entry name" value="CheY-like_superfamily"/>
</dbReference>
<dbReference type="InterPro" id="IPR036890">
    <property type="entry name" value="HATPase_C_sf"/>
</dbReference>
<dbReference type="InterPro" id="IPR005467">
    <property type="entry name" value="His_kinase_dom"/>
</dbReference>
<dbReference type="InterPro" id="IPR003661">
    <property type="entry name" value="HisK_dim/P_dom"/>
</dbReference>
<dbReference type="InterPro" id="IPR036097">
    <property type="entry name" value="HisK_dim/P_sf"/>
</dbReference>
<dbReference type="InterPro" id="IPR050736">
    <property type="entry name" value="Sensor_HK_Regulatory"/>
</dbReference>
<dbReference type="InterPro" id="IPR004358">
    <property type="entry name" value="Sig_transdc_His_kin-like_C"/>
</dbReference>
<dbReference type="InterPro" id="IPR001789">
    <property type="entry name" value="Sig_transdc_resp-reg_receiver"/>
</dbReference>
<dbReference type="PANTHER" id="PTHR43711:SF1">
    <property type="entry name" value="HISTIDINE KINASE 1"/>
    <property type="match status" value="1"/>
</dbReference>
<dbReference type="PANTHER" id="PTHR43711">
    <property type="entry name" value="TWO-COMPONENT HISTIDINE KINASE"/>
    <property type="match status" value="1"/>
</dbReference>
<dbReference type="Pfam" id="PF02518">
    <property type="entry name" value="HATPase_c"/>
    <property type="match status" value="1"/>
</dbReference>
<dbReference type="Pfam" id="PF00512">
    <property type="entry name" value="HisKA"/>
    <property type="match status" value="1"/>
</dbReference>
<dbReference type="Pfam" id="PF00072">
    <property type="entry name" value="Response_reg"/>
    <property type="match status" value="1"/>
</dbReference>
<dbReference type="PRINTS" id="PR00344">
    <property type="entry name" value="BCTRLSENSOR"/>
</dbReference>
<dbReference type="SMART" id="SM00387">
    <property type="entry name" value="HATPase_c"/>
    <property type="match status" value="1"/>
</dbReference>
<dbReference type="SMART" id="SM00388">
    <property type="entry name" value="HisKA"/>
    <property type="match status" value="1"/>
</dbReference>
<dbReference type="SMART" id="SM00448">
    <property type="entry name" value="REC"/>
    <property type="match status" value="1"/>
</dbReference>
<dbReference type="SUPFAM" id="SSF55874">
    <property type="entry name" value="ATPase domain of HSP90 chaperone/DNA topoisomerase II/histidine kinase"/>
    <property type="match status" value="1"/>
</dbReference>
<dbReference type="SUPFAM" id="SSF52172">
    <property type="entry name" value="CheY-like"/>
    <property type="match status" value="1"/>
</dbReference>
<dbReference type="SUPFAM" id="SSF47384">
    <property type="entry name" value="Homodimeric domain of signal transducing histidine kinase"/>
    <property type="match status" value="1"/>
</dbReference>
<dbReference type="PROSITE" id="PS50109">
    <property type="entry name" value="HIS_KIN"/>
    <property type="match status" value="1"/>
</dbReference>
<dbReference type="PROSITE" id="PS50110">
    <property type="entry name" value="RESPONSE_REGULATORY"/>
    <property type="match status" value="1"/>
</dbReference>
<evidence type="ECO:0000250" key="1"/>
<evidence type="ECO:0000255" key="2"/>
<evidence type="ECO:0000255" key="3">
    <source>
        <dbReference type="PROSITE-ProRule" id="PRU00107"/>
    </source>
</evidence>
<evidence type="ECO:0000255" key="4">
    <source>
        <dbReference type="PROSITE-ProRule" id="PRU00169"/>
    </source>
</evidence>
<evidence type="ECO:0000256" key="5">
    <source>
        <dbReference type="SAM" id="MobiDB-lite"/>
    </source>
</evidence>
<evidence type="ECO:0000269" key="6">
    <source>
    </source>
</evidence>
<evidence type="ECO:0000269" key="7">
    <source>
    </source>
</evidence>
<evidence type="ECO:0000269" key="8">
    <source>
    </source>
</evidence>
<evidence type="ECO:0000269" key="9">
    <source>
    </source>
</evidence>
<evidence type="ECO:0000305" key="10"/>
<keyword id="KW-0938">Abscisic acid signaling pathway</keyword>
<keyword id="KW-1003">Cell membrane</keyword>
<keyword id="KW-0418">Kinase</keyword>
<keyword id="KW-0472">Membrane</keyword>
<keyword id="KW-0597">Phosphoprotein</keyword>
<keyword id="KW-1185">Reference proteome</keyword>
<keyword id="KW-0808">Transferase</keyword>
<keyword id="KW-0812">Transmembrane</keyword>
<keyword id="KW-1133">Transmembrane helix</keyword>
<keyword id="KW-0902">Two-component regulatory system</keyword>
<proteinExistence type="evidence at protein level"/>
<accession>Q9SXL4</accession>
<protein>
    <recommendedName>
        <fullName>Histidine kinase 1</fullName>
        <ecNumber>2.7.13.3</ecNumber>
    </recommendedName>
    <alternativeName>
        <fullName>Arabidopsis histidine kinase 1</fullName>
        <shortName>AtHK1</shortName>
    </alternativeName>
    <alternativeName>
        <fullName>Protein AUTHENTIC HIS-KINASE 1</fullName>
    </alternativeName>
</protein>